<organism>
    <name type="scientific">Danio rerio</name>
    <name type="common">Zebrafish</name>
    <name type="synonym">Brachydanio rerio</name>
    <dbReference type="NCBI Taxonomy" id="7955"/>
    <lineage>
        <taxon>Eukaryota</taxon>
        <taxon>Metazoa</taxon>
        <taxon>Chordata</taxon>
        <taxon>Craniata</taxon>
        <taxon>Vertebrata</taxon>
        <taxon>Euteleostomi</taxon>
        <taxon>Actinopterygii</taxon>
        <taxon>Neopterygii</taxon>
        <taxon>Teleostei</taxon>
        <taxon>Ostariophysi</taxon>
        <taxon>Cypriniformes</taxon>
        <taxon>Danionidae</taxon>
        <taxon>Danioninae</taxon>
        <taxon>Danio</taxon>
    </lineage>
</organism>
<name>DAA19_DANRE</name>
<dbReference type="EMBL" id="BC076434">
    <property type="protein sequence ID" value="AAH76434.1"/>
    <property type="molecule type" value="mRNA"/>
</dbReference>
<dbReference type="RefSeq" id="NP_001002753.1">
    <property type="nucleotide sequence ID" value="NM_001002753.3"/>
</dbReference>
<dbReference type="SMR" id="Q6DGB6"/>
<dbReference type="FunCoup" id="Q6DGB6">
    <property type="interactions" value="37"/>
</dbReference>
<dbReference type="STRING" id="7955.ENSDARP00000069975"/>
<dbReference type="PaxDb" id="7955-ENSDARP00000069975"/>
<dbReference type="DNASU" id="437026"/>
<dbReference type="Ensembl" id="ENSDART00000075493">
    <property type="protein sequence ID" value="ENSDARP00000069975"/>
    <property type="gene ID" value="ENSDARG00000053455"/>
</dbReference>
<dbReference type="GeneID" id="437026"/>
<dbReference type="KEGG" id="dre:437026"/>
<dbReference type="AGR" id="ZFIN:ZDB-GENE-040718-253"/>
<dbReference type="CTD" id="388389"/>
<dbReference type="ZFIN" id="ZDB-GENE-040718-253">
    <property type="gene designation" value="dnaaf19"/>
</dbReference>
<dbReference type="eggNOG" id="ENOG502RY3P">
    <property type="taxonomic scope" value="Eukaryota"/>
</dbReference>
<dbReference type="HOGENOM" id="CLU_085512_0_0_1"/>
<dbReference type="InParanoid" id="Q6DGB6"/>
<dbReference type="OMA" id="YRNWRRH"/>
<dbReference type="OrthoDB" id="447931at2759"/>
<dbReference type="PhylomeDB" id="Q6DGB6"/>
<dbReference type="TreeFam" id="TF324467"/>
<dbReference type="PRO" id="PR:Q6DGB6"/>
<dbReference type="Proteomes" id="UP000000437">
    <property type="component" value="Chromosome 3"/>
</dbReference>
<dbReference type="Bgee" id="ENSDARG00000053455">
    <property type="expression patterns" value="Expressed in testis and 19 other cell types or tissues"/>
</dbReference>
<dbReference type="GO" id="GO:0005930">
    <property type="term" value="C:axoneme"/>
    <property type="evidence" value="ECO:0000314"/>
    <property type="project" value="BHF-UCL"/>
</dbReference>
<dbReference type="GO" id="GO:0005737">
    <property type="term" value="C:cytoplasm"/>
    <property type="evidence" value="ECO:0000314"/>
    <property type="project" value="BHF-UCL"/>
</dbReference>
<dbReference type="GO" id="GO:0005576">
    <property type="term" value="C:extracellular region"/>
    <property type="evidence" value="ECO:0007669"/>
    <property type="project" value="GOC"/>
</dbReference>
<dbReference type="GO" id="GO:0031514">
    <property type="term" value="C:motile cilium"/>
    <property type="evidence" value="ECO:0007669"/>
    <property type="project" value="UniProtKB-SubCell"/>
</dbReference>
<dbReference type="GO" id="GO:0036157">
    <property type="term" value="C:outer dynein arm"/>
    <property type="evidence" value="ECO:0007669"/>
    <property type="project" value="InterPro"/>
</dbReference>
<dbReference type="GO" id="GO:0070286">
    <property type="term" value="P:axonemal dynein complex assembly"/>
    <property type="evidence" value="ECO:0000315"/>
    <property type="project" value="ZFIN"/>
</dbReference>
<dbReference type="GO" id="GO:0090660">
    <property type="term" value="P:cerebrospinal fluid circulation"/>
    <property type="evidence" value="ECO:0000315"/>
    <property type="project" value="ZFIN"/>
</dbReference>
<dbReference type="GO" id="GO:0060271">
    <property type="term" value="P:cilium assembly"/>
    <property type="evidence" value="ECO:0000315"/>
    <property type="project" value="ZFIN"/>
</dbReference>
<dbReference type="GO" id="GO:0003341">
    <property type="term" value="P:cilium movement"/>
    <property type="evidence" value="ECO:0000315"/>
    <property type="project" value="ZFIN"/>
</dbReference>
<dbReference type="GO" id="GO:0007368">
    <property type="term" value="P:determination of left/right symmetry"/>
    <property type="evidence" value="ECO:0000315"/>
    <property type="project" value="ZFIN"/>
</dbReference>
<dbReference type="GO" id="GO:0003143">
    <property type="term" value="P:embryonic heart tube morphogenesis"/>
    <property type="evidence" value="ECO:0000315"/>
    <property type="project" value="ZFIN"/>
</dbReference>
<dbReference type="GO" id="GO:0003351">
    <property type="term" value="P:epithelial cilium movement involved in extracellular fluid movement"/>
    <property type="evidence" value="ECO:0000315"/>
    <property type="project" value="ZFIN"/>
</dbReference>
<dbReference type="GO" id="GO:0003146">
    <property type="term" value="P:heart jogging"/>
    <property type="evidence" value="ECO:0000315"/>
    <property type="project" value="ZFIN"/>
</dbReference>
<dbReference type="GO" id="GO:0001947">
    <property type="term" value="P:heart looping"/>
    <property type="evidence" value="ECO:0000315"/>
    <property type="project" value="ZFIN"/>
</dbReference>
<dbReference type="GO" id="GO:0036159">
    <property type="term" value="P:inner dynein arm assembly"/>
    <property type="evidence" value="ECO:0000318"/>
    <property type="project" value="GO_Central"/>
</dbReference>
<dbReference type="InterPro" id="IPR042422">
    <property type="entry name" value="CC103"/>
</dbReference>
<dbReference type="InterPro" id="IPR031733">
    <property type="entry name" value="Dynein_attach_N"/>
</dbReference>
<dbReference type="InterPro" id="IPR025986">
    <property type="entry name" value="RPAP3-like_C"/>
</dbReference>
<dbReference type="PANTHER" id="PTHR28572">
    <property type="entry name" value="COILED-COIL DOMAIN-CONTAINING PROTEIN 103"/>
    <property type="match status" value="1"/>
</dbReference>
<dbReference type="PANTHER" id="PTHR28572:SF1">
    <property type="entry name" value="COILED-COIL DOMAIN-CONTAINING PROTEIN 103"/>
    <property type="match status" value="1"/>
</dbReference>
<dbReference type="Pfam" id="PF15867">
    <property type="entry name" value="Dynein_attach_N"/>
    <property type="match status" value="1"/>
</dbReference>
<dbReference type="Pfam" id="PF13877">
    <property type="entry name" value="RPAP3_C"/>
    <property type="match status" value="1"/>
</dbReference>
<feature type="chain" id="PRO_0000263638" description="Dynein axonemal assembly factor 19">
    <location>
        <begin position="1"/>
        <end position="247"/>
    </location>
</feature>
<feature type="coiled-coil region" evidence="1">
    <location>
        <begin position="12"/>
        <end position="32"/>
    </location>
</feature>
<proteinExistence type="evidence at protein level"/>
<sequence length="247" mass="27594">MENSDVINFSCLEKELHSALQADRKYQRENDAKFRALNQKVASYEEFRDIVLASHLKPLDRNDISGSPRKQPWNPVACRTNYVCASSEQVQPQLSEVQPRSASEFIRDWRRFAGCSFEKYSLLVSLGGEALQKIFSTEIGLGLLGEFLLILSQCLKSGDEDRVTGVLDGLSKTGRFSINLSLLSQAEQEACEELFNKLKVAAGECHPYKDNSNTSVVCEAGLTHMEDNKTDITTTLKELAGKYGTEK</sequence>
<protein>
    <recommendedName>
        <fullName>Dynein axonemal assembly factor 19</fullName>
    </recommendedName>
    <alternativeName>
        <fullName>Coiled-coil domain-containing protein 103</fullName>
    </alternativeName>
    <alternativeName>
        <fullName>Protein schmalhans</fullName>
    </alternativeName>
</protein>
<reference key="1">
    <citation type="submission" date="2004-07" db="EMBL/GenBank/DDBJ databases">
        <authorList>
            <consortium name="NIH - Zebrafish Gene Collection (ZGC) project"/>
        </authorList>
    </citation>
    <scope>NUCLEOTIDE SEQUENCE [LARGE SCALE MRNA]</scope>
    <source>
        <tissue>Embryo</tissue>
    </source>
</reference>
<reference key="2">
    <citation type="journal article" date="2012" name="Nat. Genet.">
        <title>CCDC103 mutations cause primary ciliary dyskinesia by disrupting assembly of ciliary dynein arms.</title>
        <authorList>
            <person name="Panizzi J.R."/>
            <person name="Becker-Heck A."/>
            <person name="Castleman V.H."/>
            <person name="Al-Mutairi D.A."/>
            <person name="Liu Y."/>
            <person name="Loges N.T."/>
            <person name="Pathak N."/>
            <person name="Austin-Tse C."/>
            <person name="Sheridan E."/>
            <person name="Schmidts M."/>
            <person name="Olbrich H."/>
            <person name="Werner C."/>
            <person name="Haffner K."/>
            <person name="Hellman N."/>
            <person name="Chodhari R."/>
            <person name="Gupta A."/>
            <person name="Kramer-Zucker A."/>
            <person name="Olale F."/>
            <person name="Burdine R.D."/>
            <person name="Schier A.F."/>
            <person name="O'Callaghan C."/>
            <person name="Chung E.M."/>
            <person name="Reinhardt R."/>
            <person name="Mitchison H.M."/>
            <person name="King S.M."/>
            <person name="Omran H."/>
            <person name="Drummond I.A."/>
        </authorList>
    </citation>
    <scope>FUNCTION</scope>
    <scope>SUBUNIT</scope>
    <scope>SUBCELLULAR LOCATION</scope>
    <scope>DISRUPTION PHENOTYPE</scope>
    <scope>TISSUE SPECIFICITY</scope>
    <scope>INDUCTION</scope>
</reference>
<evidence type="ECO:0000255" key="1"/>
<evidence type="ECO:0000269" key="2">
    <source>
    </source>
</evidence>
<evidence type="ECO:0000305" key="3"/>
<keyword id="KW-0966">Cell projection</keyword>
<keyword id="KW-0969">Cilium</keyword>
<keyword id="KW-0970">Cilium biogenesis/degradation</keyword>
<keyword id="KW-0175">Coiled coil</keyword>
<keyword id="KW-0963">Cytoplasm</keyword>
<keyword id="KW-0282">Flagellum</keyword>
<keyword id="KW-1185">Reference proteome</keyword>
<accession>Q6DGB6</accession>
<gene>
    <name type="primary">dnaaf19</name>
    <name type="synonym">ccdc103</name>
    <name type="synonym">smh</name>
    <name type="ORF">zgc:100838</name>
</gene>
<comment type="function">
    <text evidence="2">Dynein-attachment factor required for cilia motility.</text>
</comment>
<comment type="subunit">
    <text evidence="2">Homodimer.</text>
</comment>
<comment type="subcellular location">
    <subcellularLocation>
        <location evidence="2">Cytoplasm</location>
    </subcellularLocation>
    <subcellularLocation>
        <location evidence="2">Cell projection</location>
        <location evidence="2">Cilium</location>
        <location evidence="2">Flagellum</location>
    </subcellularLocation>
</comment>
<comment type="tissue specificity">
    <text evidence="2">Expressed in all cells bearing motile cilia.</text>
</comment>
<comment type="induction">
    <text evidence="2">Expression is regulated by foxj1.</text>
</comment>
<comment type="disruption phenotype">
    <text evidence="2">Defects in dnaaf19 are the cause of the schmalhans phenotype and show a curved body axis, randomized left-right asymmetry and pronephric kidney cysts, which are characteristic features of ciliopathies. Cilia completely lack both inner dynein arms (IDAs) and outer dynein arms (ODAs) while cilia length in these mutants is not altered.</text>
</comment>
<comment type="similarity">
    <text evidence="3">Belongs to the DNAAF19/PR46b family.</text>
</comment>